<organism>
    <name type="scientific">Arabidopsis thaliana</name>
    <name type="common">Mouse-ear cress</name>
    <dbReference type="NCBI Taxonomy" id="3702"/>
    <lineage>
        <taxon>Eukaryota</taxon>
        <taxon>Viridiplantae</taxon>
        <taxon>Streptophyta</taxon>
        <taxon>Embryophyta</taxon>
        <taxon>Tracheophyta</taxon>
        <taxon>Spermatophyta</taxon>
        <taxon>Magnoliopsida</taxon>
        <taxon>eudicotyledons</taxon>
        <taxon>Gunneridae</taxon>
        <taxon>Pentapetalae</taxon>
        <taxon>rosids</taxon>
        <taxon>malvids</taxon>
        <taxon>Brassicales</taxon>
        <taxon>Brassicaceae</taxon>
        <taxon>Camelineae</taxon>
        <taxon>Arabidopsis</taxon>
    </lineage>
</organism>
<keyword id="KW-0217">Developmental protein</keyword>
<keyword id="KW-0238">DNA-binding</keyword>
<keyword id="KW-0539">Nucleus</keyword>
<keyword id="KW-1185">Reference proteome</keyword>
<keyword id="KW-0804">Transcription</keyword>
<keyword id="KW-0805">Transcription regulation</keyword>
<sequence length="334" mass="38018">MMLAVEDVLSELAGEERNERGLPPGFRFHPTDEELITFYLASKIFHGGLSGIHISEVDLNRCEPWELPEMAKMGEREWYFYSLRDRKYPTGLRTNRATTAGYWKATGKDKEVFSGGGGQLVGMKKTLVFYKGRAPRGLKTKWVMHEYRLENDHSHRHTCKEEWVICRVFNKTGDRKNVGLIHNQISYLHNHSLSTTHHHHHEALPLLIEPSNKTLTNFPSLLYDDPHQNYNNNNFLHGSSGHNIDELKALINPVVSQLNGIIFPSGNNNNDEDDFDFNLGVKTEQSSNGNEIDVRDYLENPLFQEASYGLLGFSSSPGPLHMLLDSPCPLGFQL</sequence>
<comment type="function">
    <text evidence="2 4">Transcription activator. Involved in molecular mechanisms regulating shoot apical meristem (SAM) formation during embryogenesis and organ separation. Required for axillary meristem initiation and separation of the meristem from the main stem. May act as an inhibitor of cell division.</text>
</comment>
<comment type="interaction">
    <interactant intactId="EBI-15206626">
        <id>Q9S851</id>
    </interactant>
    <interactant intactId="EBI-4459297">
        <id>Q9SW09</id>
        <label>RPS10A</label>
    </interactant>
    <organismsDiffer>false</organismsDiffer>
    <experiments>3</experiments>
</comment>
<comment type="interaction">
    <interactant intactId="EBI-15206626">
        <id>Q9S851</id>
    </interactant>
    <interactant intactId="EBI-4458966">
        <id>Q9LTF2</id>
        <label>RPS10C</label>
    </interactant>
    <organismsDiffer>false</organismsDiffer>
    <experiments>3</experiments>
</comment>
<comment type="subcellular location">
    <subcellularLocation>
        <location evidence="5">Nucleus</location>
    </subcellularLocation>
</comment>
<comment type="tissue specificity">
    <text evidence="2">In a general manner, present at the boundaries between mersitems and araising primordia.</text>
</comment>
<comment type="developmental stage">
    <text evidence="2 4">First expressed at the globular stage, mostly in the apical part of the embryo. During the triangular stage, confined to the boundary of emerging cotyledons. Later restricted to the center of the apical part of the embryo and to seedling apex, at the boundaries of the cotyledon margins and the boundaries between the SAM and the cotyledons. Localized in a one-cell-wide ring at the boundary between trichomes or lateral roots and epidermis. Accumulates at the boundaries between leaf primordia and the shoot meristem and between floral primordia and the inflorescence meristem. Found in the adaxial axils of secondary inflorescences and pedicels, and in axiallary buds. In flowers, expressed in a ring at the bases of sepals and petals. In carpels, confined to the boundaries between ovule primordia. In ovules, localized in a ring at the boundary between the nucellus and the chalaza. In the mature embryo sac, detected in the two polar nuclei of the central cell.</text>
</comment>
<comment type="induction">
    <text evidence="3">By BRM, at the chromatin level, and conferring a very specific spatial expression pattern.</text>
</comment>
<comment type="domain">
    <text>The NAC domain includes a DNA-binding domain and a dimerization domain, and confers the specificity of the transactivated target genes.</text>
</comment>
<protein>
    <recommendedName>
        <fullName>Protein CUP-SHAPED COTYLEDON 3</fullName>
    </recommendedName>
    <alternativeName>
        <fullName>NAC domain-containing protein 31</fullName>
        <shortName>ANAC031</shortName>
    </alternativeName>
    <alternativeName>
        <fullName>NAC domain-containing protein CUC3</fullName>
    </alternativeName>
</protein>
<gene>
    <name type="primary">NAC031</name>
    <name type="synonym">CUC3</name>
    <name type="synonym">NAC368</name>
    <name type="ordered locus">At1g76420</name>
    <name type="ORF">F14G6.2</name>
    <name type="ORF">F15M4.8</name>
</gene>
<name>NAC31_ARATH</name>
<feature type="chain" id="PRO_0000312288" description="Protein CUP-SHAPED COTYLEDON 3">
    <location>
        <begin position="1"/>
        <end position="334"/>
    </location>
</feature>
<feature type="domain" description="NAC" evidence="1">
    <location>
        <begin position="22"/>
        <end position="171"/>
    </location>
</feature>
<feature type="DNA-binding region" evidence="1">
    <location>
        <begin position="121"/>
        <end position="177"/>
    </location>
</feature>
<feature type="mutagenesis site" description="In cuc3-104; cup-shaped cotyledon and abnormal SAM." evidence="4">
    <original>G</original>
    <variation>D</variation>
    <location>
        <position position="25"/>
    </location>
</feature>
<feature type="mutagenesis site" description="In cuc3-102; cup-shaped cotyledon and abnormal SAM." evidence="4">
    <original>P</original>
    <variation>S</variation>
    <location>
        <position position="30"/>
    </location>
</feature>
<evidence type="ECO:0000255" key="1">
    <source>
        <dbReference type="PROSITE-ProRule" id="PRU00353"/>
    </source>
</evidence>
<evidence type="ECO:0000269" key="2">
    <source>
    </source>
</evidence>
<evidence type="ECO:0000269" key="3">
    <source>
    </source>
</evidence>
<evidence type="ECO:0000269" key="4">
    <source>
    </source>
</evidence>
<evidence type="ECO:0000305" key="5"/>
<accession>Q9S851</accession>
<proteinExistence type="evidence at protein level"/>
<reference key="1">
    <citation type="journal article" date="2003" name="Plant Cell">
        <title>The CUP-SHAPED COTYLEDON3 gene is required for boundary and shoot meristem formation in Arabidopsis.</title>
        <authorList>
            <person name="Vroemen C.W."/>
            <person name="Mordhorst A.P."/>
            <person name="Albrecht C."/>
            <person name="Kwaaitaal M.A.C.J."/>
            <person name="de Vries S.C."/>
        </authorList>
    </citation>
    <scope>NUCLEOTIDE SEQUENCE [LARGE SCALE GENOMIC DNA]</scope>
    <scope>FUNCTION</scope>
    <scope>TISSUE SPECIFICITY</scope>
    <scope>DEVELOPMENTAL STAGE</scope>
    <source>
        <strain>cv. Landsberg erecta</strain>
        <tissue>Flower</tissue>
    </source>
</reference>
<reference key="2">
    <citation type="journal article" date="2000" name="Nature">
        <title>Sequence and analysis of chromosome 1 of the plant Arabidopsis thaliana.</title>
        <authorList>
            <person name="Theologis A."/>
            <person name="Ecker J.R."/>
            <person name="Palm C.J."/>
            <person name="Federspiel N.A."/>
            <person name="Kaul S."/>
            <person name="White O."/>
            <person name="Alonso J."/>
            <person name="Altafi H."/>
            <person name="Araujo R."/>
            <person name="Bowman C.L."/>
            <person name="Brooks S.Y."/>
            <person name="Buehler E."/>
            <person name="Chan A."/>
            <person name="Chao Q."/>
            <person name="Chen H."/>
            <person name="Cheuk R.F."/>
            <person name="Chin C.W."/>
            <person name="Chung M.K."/>
            <person name="Conn L."/>
            <person name="Conway A.B."/>
            <person name="Conway A.R."/>
            <person name="Creasy T.H."/>
            <person name="Dewar K."/>
            <person name="Dunn P."/>
            <person name="Etgu P."/>
            <person name="Feldblyum T.V."/>
            <person name="Feng J.-D."/>
            <person name="Fong B."/>
            <person name="Fujii C.Y."/>
            <person name="Gill J.E."/>
            <person name="Goldsmith A.D."/>
            <person name="Haas B."/>
            <person name="Hansen N.F."/>
            <person name="Hughes B."/>
            <person name="Huizar L."/>
            <person name="Hunter J.L."/>
            <person name="Jenkins J."/>
            <person name="Johnson-Hopson C."/>
            <person name="Khan S."/>
            <person name="Khaykin E."/>
            <person name="Kim C.J."/>
            <person name="Koo H.L."/>
            <person name="Kremenetskaia I."/>
            <person name="Kurtz D.B."/>
            <person name="Kwan A."/>
            <person name="Lam B."/>
            <person name="Langin-Hooper S."/>
            <person name="Lee A."/>
            <person name="Lee J.M."/>
            <person name="Lenz C.A."/>
            <person name="Li J.H."/>
            <person name="Li Y.-P."/>
            <person name="Lin X."/>
            <person name="Liu S.X."/>
            <person name="Liu Z.A."/>
            <person name="Luros J.S."/>
            <person name="Maiti R."/>
            <person name="Marziali A."/>
            <person name="Militscher J."/>
            <person name="Miranda M."/>
            <person name="Nguyen M."/>
            <person name="Nierman W.C."/>
            <person name="Osborne B.I."/>
            <person name="Pai G."/>
            <person name="Peterson J."/>
            <person name="Pham P.K."/>
            <person name="Rizzo M."/>
            <person name="Rooney T."/>
            <person name="Rowley D."/>
            <person name="Sakano H."/>
            <person name="Salzberg S.L."/>
            <person name="Schwartz J.R."/>
            <person name="Shinn P."/>
            <person name="Southwick A.M."/>
            <person name="Sun H."/>
            <person name="Tallon L.J."/>
            <person name="Tambunga G."/>
            <person name="Toriumi M.J."/>
            <person name="Town C.D."/>
            <person name="Utterback T."/>
            <person name="Van Aken S."/>
            <person name="Vaysberg M."/>
            <person name="Vysotskaia V.S."/>
            <person name="Walker M."/>
            <person name="Wu D."/>
            <person name="Yu G."/>
            <person name="Fraser C.M."/>
            <person name="Venter J.C."/>
            <person name="Davis R.W."/>
        </authorList>
    </citation>
    <scope>NUCLEOTIDE SEQUENCE [LARGE SCALE GENOMIC DNA]</scope>
    <source>
        <strain>cv. Columbia</strain>
    </source>
</reference>
<reference key="3">
    <citation type="journal article" date="2017" name="Plant J.">
        <title>Araport11: a complete reannotation of the Arabidopsis thaliana reference genome.</title>
        <authorList>
            <person name="Cheng C.Y."/>
            <person name="Krishnakumar V."/>
            <person name="Chan A.P."/>
            <person name="Thibaud-Nissen F."/>
            <person name="Schobel S."/>
            <person name="Town C.D."/>
        </authorList>
    </citation>
    <scope>GENOME REANNOTATION</scope>
    <source>
        <strain>cv. Columbia</strain>
    </source>
</reference>
<reference key="4">
    <citation type="journal article" date="2003" name="DNA Res.">
        <title>Comprehensive analysis of NAC family genes in Oryza sativa and Arabidopsis thaliana.</title>
        <authorList>
            <person name="Ooka H."/>
            <person name="Satoh K."/>
            <person name="Doi K."/>
            <person name="Nagata T."/>
            <person name="Otomo Y."/>
            <person name="Murakami K."/>
            <person name="Matsubara K."/>
            <person name="Osato N."/>
            <person name="Kawai J."/>
            <person name="Carninci P."/>
            <person name="Hayashizaki Y."/>
            <person name="Suzuki K."/>
            <person name="Kojima K."/>
            <person name="Takahara Y."/>
            <person name="Yamamoto K."/>
            <person name="Kikuchi S."/>
        </authorList>
    </citation>
    <scope>GENE FAMILY</scope>
    <scope>NOMENCLATURE</scope>
</reference>
<reference key="5">
    <citation type="journal article" date="2006" name="Development">
        <title>A role for chromatin remodeling in regulation of CUC gene expression in the Arabidopsis cotyledon boundary.</title>
        <authorList>
            <person name="Kwon C.S."/>
            <person name="Hibara K."/>
            <person name="Pfluger J."/>
            <person name="Bezhani S."/>
            <person name="Metha H."/>
            <person name="Aida M."/>
            <person name="Tasaka M."/>
            <person name="Wagner D."/>
        </authorList>
    </citation>
    <scope>INDUCTION BY BRM</scope>
</reference>
<reference key="6">
    <citation type="journal article" date="2006" name="Plant Cell">
        <title>Arabidopsis CUP-SHAPED COTYLEDON3 regulates postembryonic shoot meristem and organ boundary formation.</title>
        <authorList>
            <person name="Hibara K."/>
            <person name="Karim M.R."/>
            <person name="Takada S."/>
            <person name="Taoka K."/>
            <person name="Furutani M."/>
            <person name="Aida M."/>
            <person name="Tasaka M."/>
        </authorList>
    </citation>
    <scope>FUNCTION</scope>
    <scope>DEVELOPMENTAL STAGE</scope>
    <scope>MUTAGENESIS OF GLY-25 AND PRO-30</scope>
</reference>
<reference key="7">
    <citation type="journal article" date="2007" name="Mol. Cell. Proteomics">
        <title>Multidimensional protein identification technology (MudPIT) analysis of ubiquitinated proteins in plants.</title>
        <authorList>
            <person name="Maor R."/>
            <person name="Jones A."/>
            <person name="Nuehse T.S."/>
            <person name="Studholme D.J."/>
            <person name="Peck S.C."/>
            <person name="Shirasu K."/>
        </authorList>
    </citation>
    <scope>IDENTIFICATION BY MASS SPECTROMETRY [LARGE SCALE ANALYSIS]</scope>
    <source>
        <strain>cv. Landsberg erecta</strain>
    </source>
</reference>
<dbReference type="EMBL" id="AF543194">
    <property type="protein sequence ID" value="AAP82630.1"/>
    <property type="molecule type" value="Genomic_DNA"/>
</dbReference>
<dbReference type="EMBL" id="AC012394">
    <property type="protein sequence ID" value="AAF16659.1"/>
    <property type="molecule type" value="Genomic_DNA"/>
</dbReference>
<dbReference type="EMBL" id="AC015450">
    <property type="protein sequence ID" value="AAG51953.1"/>
    <property type="molecule type" value="Genomic_DNA"/>
</dbReference>
<dbReference type="EMBL" id="CP002684">
    <property type="protein sequence ID" value="AEE35839.1"/>
    <property type="molecule type" value="Genomic_DNA"/>
</dbReference>
<dbReference type="PIR" id="H96791">
    <property type="entry name" value="H96791"/>
</dbReference>
<dbReference type="RefSeq" id="NP_177768.1">
    <property type="nucleotide sequence ID" value="NM_106292.3"/>
</dbReference>
<dbReference type="SMR" id="Q9S851"/>
<dbReference type="BioGRID" id="29194">
    <property type="interactions" value="10"/>
</dbReference>
<dbReference type="FunCoup" id="Q9S851">
    <property type="interactions" value="90"/>
</dbReference>
<dbReference type="IntAct" id="Q9S851">
    <property type="interactions" value="7"/>
</dbReference>
<dbReference type="STRING" id="3702.Q9S851"/>
<dbReference type="iPTMnet" id="Q9S851"/>
<dbReference type="PaxDb" id="3702-AT1G76420.1"/>
<dbReference type="DNASU" id="843975"/>
<dbReference type="EnsemblPlants" id="AT1G76420.1">
    <property type="protein sequence ID" value="AT1G76420.1"/>
    <property type="gene ID" value="AT1G76420"/>
</dbReference>
<dbReference type="GeneID" id="843975"/>
<dbReference type="Gramene" id="AT1G76420.1">
    <property type="protein sequence ID" value="AT1G76420.1"/>
    <property type="gene ID" value="AT1G76420"/>
</dbReference>
<dbReference type="KEGG" id="ath:AT1G76420"/>
<dbReference type="Araport" id="AT1G76420"/>
<dbReference type="TAIR" id="AT1G76420">
    <property type="gene designation" value="CUC3"/>
</dbReference>
<dbReference type="eggNOG" id="ENOG502QQ8S">
    <property type="taxonomic scope" value="Eukaryota"/>
</dbReference>
<dbReference type="HOGENOM" id="CLU_035664_4_0_1"/>
<dbReference type="InParanoid" id="Q9S851"/>
<dbReference type="OMA" id="PGPLHML"/>
<dbReference type="PhylomeDB" id="Q9S851"/>
<dbReference type="PRO" id="PR:Q9S851"/>
<dbReference type="Proteomes" id="UP000006548">
    <property type="component" value="Chromosome 1"/>
</dbReference>
<dbReference type="ExpressionAtlas" id="Q9S851">
    <property type="expression patterns" value="baseline and differential"/>
</dbReference>
<dbReference type="GO" id="GO:0005634">
    <property type="term" value="C:nucleus"/>
    <property type="evidence" value="ECO:0007669"/>
    <property type="project" value="UniProtKB-SubCell"/>
</dbReference>
<dbReference type="GO" id="GO:0003700">
    <property type="term" value="F:DNA-binding transcription factor activity"/>
    <property type="evidence" value="ECO:0000250"/>
    <property type="project" value="TAIR"/>
</dbReference>
<dbReference type="GO" id="GO:0000976">
    <property type="term" value="F:transcription cis-regulatory region binding"/>
    <property type="evidence" value="ECO:0000353"/>
    <property type="project" value="TAIR"/>
</dbReference>
<dbReference type="GO" id="GO:0010014">
    <property type="term" value="P:meristem initiation"/>
    <property type="evidence" value="ECO:0000316"/>
    <property type="project" value="TAIR"/>
</dbReference>
<dbReference type="GO" id="GO:0010199">
    <property type="term" value="P:organ boundary specification between lateral organs and the meristem"/>
    <property type="evidence" value="ECO:0000316"/>
    <property type="project" value="TAIR"/>
</dbReference>
<dbReference type="FunFam" id="2.170.150.80:FF:000006">
    <property type="entry name" value="NAC domain-containing protein 100-like"/>
    <property type="match status" value="1"/>
</dbReference>
<dbReference type="Gene3D" id="2.170.150.80">
    <property type="entry name" value="NAC domain"/>
    <property type="match status" value="1"/>
</dbReference>
<dbReference type="InterPro" id="IPR003441">
    <property type="entry name" value="NAC-dom"/>
</dbReference>
<dbReference type="InterPro" id="IPR036093">
    <property type="entry name" value="NAC_dom_sf"/>
</dbReference>
<dbReference type="PANTHER" id="PTHR31744">
    <property type="entry name" value="PROTEIN CUP-SHAPED COTYLEDON 2-RELATED"/>
    <property type="match status" value="1"/>
</dbReference>
<dbReference type="PANTHER" id="PTHR31744:SF86">
    <property type="entry name" value="PROTEIN CUP-SHAPED COTYLEDON 3"/>
    <property type="match status" value="1"/>
</dbReference>
<dbReference type="Pfam" id="PF02365">
    <property type="entry name" value="NAM"/>
    <property type="match status" value="1"/>
</dbReference>
<dbReference type="SUPFAM" id="SSF101941">
    <property type="entry name" value="NAC domain"/>
    <property type="match status" value="1"/>
</dbReference>
<dbReference type="PROSITE" id="PS51005">
    <property type="entry name" value="NAC"/>
    <property type="match status" value="1"/>
</dbReference>